<proteinExistence type="inferred from homology"/>
<protein>
    <recommendedName>
        <fullName>Serine/threonine-protein kinase tel1</fullName>
        <ecNumber>2.7.11.1</ecNumber>
    </recommendedName>
    <alternativeName>
        <fullName>ATM homolog</fullName>
    </alternativeName>
    <alternativeName>
        <fullName>DNA-damage checkpoint kinase tel1</fullName>
    </alternativeName>
    <alternativeName>
        <fullName>Telomere length regulation protein 1</fullName>
    </alternativeName>
</protein>
<organism>
    <name type="scientific">Emericella nidulans (strain FGSC A4 / ATCC 38163 / CBS 112.46 / NRRL 194 / M139)</name>
    <name type="common">Aspergillus nidulans</name>
    <dbReference type="NCBI Taxonomy" id="227321"/>
    <lineage>
        <taxon>Eukaryota</taxon>
        <taxon>Fungi</taxon>
        <taxon>Dikarya</taxon>
        <taxon>Ascomycota</taxon>
        <taxon>Pezizomycotina</taxon>
        <taxon>Eurotiomycetes</taxon>
        <taxon>Eurotiomycetidae</taxon>
        <taxon>Eurotiales</taxon>
        <taxon>Aspergillaceae</taxon>
        <taxon>Aspergillus</taxon>
        <taxon>Aspergillus subgen. Nidulantes</taxon>
    </lineage>
</organism>
<feature type="chain" id="PRO_0000227702" description="Serine/threonine-protein kinase tel1">
    <location>
        <begin position="1"/>
        <end position="2793"/>
    </location>
</feature>
<feature type="domain" description="FAT" evidence="3">
    <location>
        <begin position="1734"/>
        <end position="2334"/>
    </location>
</feature>
<feature type="domain" description="PI3K/PI4K catalytic" evidence="2">
    <location>
        <begin position="2438"/>
        <end position="2750"/>
    </location>
</feature>
<feature type="domain" description="FATC" evidence="3 4">
    <location>
        <begin position="2761"/>
        <end position="2793"/>
    </location>
</feature>
<feature type="region of interest" description="G-loop" evidence="2">
    <location>
        <begin position="2444"/>
        <end position="2450"/>
    </location>
</feature>
<feature type="region of interest" description="Catalytic loop" evidence="2">
    <location>
        <begin position="2616"/>
        <end position="2624"/>
    </location>
</feature>
<feature type="region of interest" description="Activation loop" evidence="2">
    <location>
        <begin position="2636"/>
        <end position="2660"/>
    </location>
</feature>
<feature type="region of interest" description="Disordered" evidence="5">
    <location>
        <begin position="2718"/>
        <end position="2748"/>
    </location>
</feature>
<feature type="compositionally biased region" description="Polar residues" evidence="5">
    <location>
        <begin position="2733"/>
        <end position="2745"/>
    </location>
</feature>
<keyword id="KW-0067">ATP-binding</keyword>
<keyword id="KW-0156">Chromatin regulator</keyword>
<keyword id="KW-0158">Chromosome</keyword>
<keyword id="KW-0227">DNA damage</keyword>
<keyword id="KW-0418">Kinase</keyword>
<keyword id="KW-0547">Nucleotide-binding</keyword>
<keyword id="KW-0539">Nucleus</keyword>
<keyword id="KW-1185">Reference proteome</keyword>
<keyword id="KW-0723">Serine/threonine-protein kinase</keyword>
<keyword id="KW-0779">Telomere</keyword>
<keyword id="KW-0808">Transferase</keyword>
<reference key="1">
    <citation type="journal article" date="2005" name="Nature">
        <title>Sequencing of Aspergillus nidulans and comparative analysis with A. fumigatus and A. oryzae.</title>
        <authorList>
            <person name="Galagan J.E."/>
            <person name="Calvo S.E."/>
            <person name="Cuomo C."/>
            <person name="Ma L.-J."/>
            <person name="Wortman J.R."/>
            <person name="Batzoglou S."/>
            <person name="Lee S.-I."/>
            <person name="Bastuerkmen M."/>
            <person name="Spevak C.C."/>
            <person name="Clutterbuck J."/>
            <person name="Kapitonov V."/>
            <person name="Jurka J."/>
            <person name="Scazzocchio C."/>
            <person name="Farman M.L."/>
            <person name="Butler J."/>
            <person name="Purcell S."/>
            <person name="Harris S."/>
            <person name="Braus G.H."/>
            <person name="Draht O."/>
            <person name="Busch S."/>
            <person name="D'Enfert C."/>
            <person name="Bouchier C."/>
            <person name="Goldman G.H."/>
            <person name="Bell-Pedersen D."/>
            <person name="Griffiths-Jones S."/>
            <person name="Doonan J.H."/>
            <person name="Yu J."/>
            <person name="Vienken K."/>
            <person name="Pain A."/>
            <person name="Freitag M."/>
            <person name="Selker E.U."/>
            <person name="Archer D.B."/>
            <person name="Penalva M.A."/>
            <person name="Oakley B.R."/>
            <person name="Momany M."/>
            <person name="Tanaka T."/>
            <person name="Kumagai T."/>
            <person name="Asai K."/>
            <person name="Machida M."/>
            <person name="Nierman W.C."/>
            <person name="Denning D.W."/>
            <person name="Caddick M.X."/>
            <person name="Hynes M."/>
            <person name="Paoletti M."/>
            <person name="Fischer R."/>
            <person name="Miller B.L."/>
            <person name="Dyer P.S."/>
            <person name="Sachs M.S."/>
            <person name="Osmani S.A."/>
            <person name="Birren B.W."/>
        </authorList>
    </citation>
    <scope>NUCLEOTIDE SEQUENCE [LARGE SCALE GENOMIC DNA]</scope>
    <source>
        <strain>FGSC A4 / ATCC 38163 / CBS 112.46 / NRRL 194 / M139</strain>
    </source>
</reference>
<reference key="2">
    <citation type="journal article" date="2009" name="Fungal Genet. Biol.">
        <title>The 2008 update of the Aspergillus nidulans genome annotation: a community effort.</title>
        <authorList>
            <person name="Wortman J.R."/>
            <person name="Gilsenan J.M."/>
            <person name="Joardar V."/>
            <person name="Deegan J."/>
            <person name="Clutterbuck J."/>
            <person name="Andersen M.R."/>
            <person name="Archer D."/>
            <person name="Bencina M."/>
            <person name="Braus G."/>
            <person name="Coutinho P."/>
            <person name="von Dohren H."/>
            <person name="Doonan J."/>
            <person name="Driessen A.J."/>
            <person name="Durek P."/>
            <person name="Espeso E."/>
            <person name="Fekete E."/>
            <person name="Flipphi M."/>
            <person name="Estrada C.G."/>
            <person name="Geysens S."/>
            <person name="Goldman G."/>
            <person name="de Groot P.W."/>
            <person name="Hansen K."/>
            <person name="Harris S.D."/>
            <person name="Heinekamp T."/>
            <person name="Helmstaedt K."/>
            <person name="Henrissat B."/>
            <person name="Hofmann G."/>
            <person name="Homan T."/>
            <person name="Horio T."/>
            <person name="Horiuchi H."/>
            <person name="James S."/>
            <person name="Jones M."/>
            <person name="Karaffa L."/>
            <person name="Karanyi Z."/>
            <person name="Kato M."/>
            <person name="Keller N."/>
            <person name="Kelly D.E."/>
            <person name="Kiel J.A."/>
            <person name="Kim J.M."/>
            <person name="van der Klei I.J."/>
            <person name="Klis F.M."/>
            <person name="Kovalchuk A."/>
            <person name="Krasevec N."/>
            <person name="Kubicek C.P."/>
            <person name="Liu B."/>
            <person name="Maccabe A."/>
            <person name="Meyer V."/>
            <person name="Mirabito P."/>
            <person name="Miskei M."/>
            <person name="Mos M."/>
            <person name="Mullins J."/>
            <person name="Nelson D.R."/>
            <person name="Nielsen J."/>
            <person name="Oakley B.R."/>
            <person name="Osmani S.A."/>
            <person name="Pakula T."/>
            <person name="Paszewski A."/>
            <person name="Paulsen I."/>
            <person name="Pilsyk S."/>
            <person name="Pocsi I."/>
            <person name="Punt P.J."/>
            <person name="Ram A.F."/>
            <person name="Ren Q."/>
            <person name="Robellet X."/>
            <person name="Robson G."/>
            <person name="Seiboth B."/>
            <person name="van Solingen P."/>
            <person name="Specht T."/>
            <person name="Sun J."/>
            <person name="Taheri-Talesh N."/>
            <person name="Takeshita N."/>
            <person name="Ussery D."/>
            <person name="vanKuyk P.A."/>
            <person name="Visser H."/>
            <person name="van de Vondervoort P.J."/>
            <person name="de Vries R.P."/>
            <person name="Walton J."/>
            <person name="Xiang X."/>
            <person name="Xiong Y."/>
            <person name="Zeng A.P."/>
            <person name="Brandt B.W."/>
            <person name="Cornell M.J."/>
            <person name="van den Hondel C.A."/>
            <person name="Visser J."/>
            <person name="Oliver S.G."/>
            <person name="Turner G."/>
        </authorList>
    </citation>
    <scope>GENOME REANNOTATION</scope>
    <source>
        <strain>FGSC A4 / ATCC 38163 / CBS 112.46 / NRRL 194 / M139</strain>
    </source>
</reference>
<comment type="function">
    <text evidence="1">Serine/threonine protein kinase which activates checkpoint signaling upon genotoxic stresses such as ionizing radiation (IR), ultraviolet light (UV), or DNA replication stalling, thereby acting as a DNA damage sensor. Recognizes the substrate consensus sequence [ST]-Q. Phosphorylates histone H2A to form H2AS128ph (gamma-H2A) at sites of DNA damage, involved in the regulation of DNA damage response mechanism. Required for the control of telomere length and genome stability (By similarity).</text>
</comment>
<comment type="catalytic activity">
    <reaction>
        <text>L-seryl-[protein] + ATP = O-phospho-L-seryl-[protein] + ADP + H(+)</text>
        <dbReference type="Rhea" id="RHEA:17989"/>
        <dbReference type="Rhea" id="RHEA-COMP:9863"/>
        <dbReference type="Rhea" id="RHEA-COMP:11604"/>
        <dbReference type="ChEBI" id="CHEBI:15378"/>
        <dbReference type="ChEBI" id="CHEBI:29999"/>
        <dbReference type="ChEBI" id="CHEBI:30616"/>
        <dbReference type="ChEBI" id="CHEBI:83421"/>
        <dbReference type="ChEBI" id="CHEBI:456216"/>
        <dbReference type="EC" id="2.7.11.1"/>
    </reaction>
</comment>
<comment type="catalytic activity">
    <reaction>
        <text>L-threonyl-[protein] + ATP = O-phospho-L-threonyl-[protein] + ADP + H(+)</text>
        <dbReference type="Rhea" id="RHEA:46608"/>
        <dbReference type="Rhea" id="RHEA-COMP:11060"/>
        <dbReference type="Rhea" id="RHEA-COMP:11605"/>
        <dbReference type="ChEBI" id="CHEBI:15378"/>
        <dbReference type="ChEBI" id="CHEBI:30013"/>
        <dbReference type="ChEBI" id="CHEBI:30616"/>
        <dbReference type="ChEBI" id="CHEBI:61977"/>
        <dbReference type="ChEBI" id="CHEBI:456216"/>
        <dbReference type="EC" id="2.7.11.1"/>
    </reaction>
</comment>
<comment type="subunit">
    <text evidence="1">Associates with DNA double-strand breaks.</text>
</comment>
<comment type="subcellular location">
    <subcellularLocation>
        <location evidence="1">Nucleus</location>
    </subcellularLocation>
    <subcellularLocation>
        <location evidence="1">Chromosome</location>
        <location evidence="1">Telomere</location>
    </subcellularLocation>
    <text evidence="1">Localizes to nuclear DNA repair foci with other DNA repair proteins in response to DNA double strand breaks.</text>
</comment>
<comment type="similarity">
    <text evidence="6">Belongs to the PI3/PI4-kinase family. ATM subfamily.</text>
</comment>
<name>ATM_EMENI</name>
<gene>
    <name type="primary">tel1</name>
    <name type="ORF">AN0038</name>
</gene>
<accession>Q5BHE2</accession>
<accession>C8VRE5</accession>
<sequence>MKGEITLDGAIALLSSDKTKDRTDGLADLKHILQKNKRNSNLQSMSDKACHKIFESLFRLVSTEKTFYNRANSKGASSSKAAATRLSACASVVRTAVETFLRNLRIKSVRAILDHITNVLVSPDSSLFELLSVDYTKCLSTILHYPPHVEHLGVEEWESVLKFCLKVVNVRNDHNSQQSTWSPHSSVMDDYIGASGGRSTPSRMTPSLAVREKPKGPTGVVEEALSCIKILSGVPNAPLQDNAESILLGLASYVGSPSLSGSGHQTAFSAINAVAMGIIFDNSELVRVTLLDLVPVIRQHWTTKLMGLKDELLVTTMLIVTFLIDEIRRKPDEALIAVIDGLIHTLQREYFRRSEKDILQVDELVFDTNSIGQHEKFRLWPRLESPRSEHNWTVVWIMARLLELSEELTTRLSTHCPPEAETPSKRQRISSKIDDVFRDSTASFGIRRVCALQLIPFLLNHYACIDSKVSLLERLIPNINDDNATISSWTMIAIACIAASPQADKPPLKRYWQQAWDLTSRASTSQLTSRAACYLQNSILQYSLLDYAAVAETINSMLSFVRLNGPSTVSDASLELWASVIRMTAQINPGSVSNASVQICELVDIYDIWDAETTVSIQKSSQSDPNDLGILDLLQAKSESFLHTWQSLSEDKSRHVTPDIVQILTSFCITVALYTSCLPEQPGPRLQTLLSNSRPTAIHRALYGLLTPLSEVLESQRQSHKQRLYALNDDTMDLDDPFGPSTDQVEEASNILCTNRSDLPLFQDSASFHRYMTILISIYNRMYSQQSEPQQHVTRALEDYLNDLDEVDLLAAHDLLPYVYQSCARTDRQTQLVLLENLGEKCLQTYELERCENSHLLCIQMMCSLAMSWTRGTQDSLSDSAADIYTWFTTIFLKKGRASSSVLIAFAKLLGVILSLNPAYSSDQSSPSPKTTLFKIISDGEVLVKFNAGSLVPQLFGQFLLEDHDNVFNDVLECLPRDPTWEEGIAVRLFLLAQLASKWHTLLRRSIYHIFETPAQVHHSLWYAEKCLRSVSDALGLQDAKEIFRLFSSQILYTWTETQSIKSMPFSIFGYANLNDMICDAQDEIVGQIMMRASESDAAELSEILGRPFVGLLTDSFYKAEAYTIAHDISTPPREGSQPKGVENRLKKILGAEVFVTLIEAQFPQIVATFFGSLDFFQQVEKAFSKRESFQEALVTLKRITEKGAARTVLPPNQQPSFRARYLLDELEFLCKRSGYELETIWTPTLASYVCRTLLESIHPALGSLHACSVLRKIKILICVAGPVMLSDYPFEMIIHGLQPFLVDISCSEDAVAIFWYLLEAGKTYLCEQPGLMAGIAVSTSLSLGRFLASPPVNSRQESQLQAVVGNLRTFCRWFDGYLRSYTSPALDDESSRSFRRFTCSLQTIVEQESSGSGANETDLLLEVLKDRESKSGLLSKPISDRVISLLCSTSKAALGYHLTTIERDEDAILNAVTVCQTLRDFNPGTEYRSWAARVIGRAFAATGKISDALLREQDLTLFRSSSTQSGTDILCRSKANILEVLGSKLLNSRQTGPIERTLQLIISNLANFPDFEPCVSAISPSVMKALTWSPYQCPGISLNALEAKELENVHGWDLSLSPSYWARNVGLFLSKAAAEDPVIGSLSNILYLIPDLAVQLLPYILHDALLAEIRGKVAEVRDSISQIFNETLRAGAENSIPHARLIIKCVLYLRNQPKPGEETIVDRDDWLDINYAVASSAASRCRLPKTALMFLETHVSRCTASSRRSSVAKYDLPAGLLHDIFKNIDDPDFFYGVQQTSSLDSVIETLEHESSGFKNLLFQSAQYDSEIQMTGSGNAYGVLKALNSTNLQGIANSMIGALGNSSDTAVPLGSMLKAATNLRQWEIPISPLNTSPPATIFRAFQALNTPGPLVDMRASIGESYRSNLNLINSDRRSATSLRTAMRTLGILTEIEEVLGSGSAAEIDQKWEEISARTSWLKNTDVQEVGEILSSHETLFSSIKQKDYLRSAFNLSDIDAQLLEVKVIRQSLHIARNHGIAQASLRSAVYLSKLANHSVSLGLNIEGVAKFDLANVLWDQGEMAPSIQILQQLKDRNDLHKQAIPISRAELLVTLSQGHHIAEARLEKPEAIIQNYLTPAVKELKGRSEGEDAGRVYHGFAIFCDQQLQNPDGLEDFARIEQLRNRKEKEVVALDAMLKTAEGKERDNLKFHRTKTKQWFDLDDREYQRLKRSREAFLQQCLENYLICLRESEAYNNDVLRFCALWLAQSHSDIANSAVSKYIAGVPSRKFAPLMNQLTSRLLDVSDDFQALLSELIYRICSDHPFHGMYQIFASSKSKGGRDQSALSRNRAAAKLADIMRNDRHIGPLWVAVHNTNINYVRFAVERLDDKAKSGAKIRLNKLAPGIRLEQDAVNQRLPPPTMKIDIRVDCDYSDVPKLAKYLPDFTVASGVSAPKIVTAIASNGVRYKQLFKGGNDDLRQDAIMEQVFEQVSSLLKDHQATRQRNLGIRAYKVLPLTSNAGIIEFVPNTIPLNDFLMPAHQRYYPRDMKPSACRKHIADVQTRSFEQRVRTYRQVIEKFHPVMRYFFMEKFNNPDDWFGRRLSYTQSTAAISILGHVLGLGDRHGHNILLDERTGEVVHIDLGVAFEQGRVLPVPEVVPFRLTRDLVDGMGITKTEGVFRRCCEFTLEALRQESYSIMTILDVLRYDPLYSWTVSPLRMKKMQEQDTSDGPPVLPGSTTDQQRPTNEPSEADRALTVVAKKLSKTLSVTATVNELIQQATDEKNLAVLYCGWAAYA</sequence>
<evidence type="ECO:0000250" key="1"/>
<evidence type="ECO:0000255" key="2">
    <source>
        <dbReference type="PROSITE-ProRule" id="PRU00269"/>
    </source>
</evidence>
<evidence type="ECO:0000255" key="3">
    <source>
        <dbReference type="PROSITE-ProRule" id="PRU00534"/>
    </source>
</evidence>
<evidence type="ECO:0000255" key="4">
    <source>
        <dbReference type="PROSITE-ProRule" id="PRU00535"/>
    </source>
</evidence>
<evidence type="ECO:0000256" key="5">
    <source>
        <dbReference type="SAM" id="MobiDB-lite"/>
    </source>
</evidence>
<evidence type="ECO:0000305" key="6"/>
<dbReference type="EC" id="2.7.11.1"/>
<dbReference type="EMBL" id="AACD01000002">
    <property type="protein sequence ID" value="EAA65357.1"/>
    <property type="molecule type" value="Genomic_DNA"/>
</dbReference>
<dbReference type="EMBL" id="BN001308">
    <property type="protein sequence ID" value="CBF90326.1"/>
    <property type="molecule type" value="Genomic_DNA"/>
</dbReference>
<dbReference type="RefSeq" id="XP_657642.1">
    <property type="nucleotide sequence ID" value="XM_652550.1"/>
</dbReference>
<dbReference type="SMR" id="Q5BHE2"/>
<dbReference type="FunCoup" id="Q5BHE2">
    <property type="interactions" value="88"/>
</dbReference>
<dbReference type="STRING" id="227321.Q5BHE2"/>
<dbReference type="EnsemblFungi" id="CBF90326">
    <property type="protein sequence ID" value="CBF90326"/>
    <property type="gene ID" value="ANIA_00038"/>
</dbReference>
<dbReference type="KEGG" id="ani:ANIA_00038"/>
<dbReference type="eggNOG" id="KOG0892">
    <property type="taxonomic scope" value="Eukaryota"/>
</dbReference>
<dbReference type="HOGENOM" id="CLU_000178_8_2_1"/>
<dbReference type="InParanoid" id="Q5BHE2"/>
<dbReference type="OMA" id="HACSVIR"/>
<dbReference type="OrthoDB" id="381190at2759"/>
<dbReference type="Proteomes" id="UP000000560">
    <property type="component" value="Chromosome VIII"/>
</dbReference>
<dbReference type="GO" id="GO:0005694">
    <property type="term" value="C:chromosome"/>
    <property type="evidence" value="ECO:0000318"/>
    <property type="project" value="GO_Central"/>
</dbReference>
<dbReference type="GO" id="GO:0000781">
    <property type="term" value="C:chromosome, telomeric region"/>
    <property type="evidence" value="ECO:0007669"/>
    <property type="project" value="UniProtKB-SubCell"/>
</dbReference>
<dbReference type="GO" id="GO:0005634">
    <property type="term" value="C:nucleus"/>
    <property type="evidence" value="ECO:0000318"/>
    <property type="project" value="GO_Central"/>
</dbReference>
<dbReference type="GO" id="GO:0005524">
    <property type="term" value="F:ATP binding"/>
    <property type="evidence" value="ECO:0007669"/>
    <property type="project" value="UniProtKB-KW"/>
</dbReference>
<dbReference type="GO" id="GO:0106310">
    <property type="term" value="F:protein serine kinase activity"/>
    <property type="evidence" value="ECO:0007669"/>
    <property type="project" value="RHEA"/>
</dbReference>
<dbReference type="GO" id="GO:0004674">
    <property type="term" value="F:protein serine/threonine kinase activity"/>
    <property type="evidence" value="ECO:0000318"/>
    <property type="project" value="GO_Central"/>
</dbReference>
<dbReference type="GO" id="GO:0006325">
    <property type="term" value="P:chromatin organization"/>
    <property type="evidence" value="ECO:0007669"/>
    <property type="project" value="UniProtKB-KW"/>
</dbReference>
<dbReference type="GO" id="GO:0000077">
    <property type="term" value="P:DNA damage checkpoint signaling"/>
    <property type="evidence" value="ECO:0000318"/>
    <property type="project" value="GO_Central"/>
</dbReference>
<dbReference type="GO" id="GO:0006302">
    <property type="term" value="P:double-strand break repair"/>
    <property type="evidence" value="ECO:0000318"/>
    <property type="project" value="GO_Central"/>
</dbReference>
<dbReference type="GO" id="GO:0019222">
    <property type="term" value="P:regulation of metabolic process"/>
    <property type="evidence" value="ECO:0007669"/>
    <property type="project" value="UniProtKB-ARBA"/>
</dbReference>
<dbReference type="GO" id="GO:0000723">
    <property type="term" value="P:telomere maintenance"/>
    <property type="evidence" value="ECO:0000318"/>
    <property type="project" value="GO_Central"/>
</dbReference>
<dbReference type="CDD" id="cd05171">
    <property type="entry name" value="PIKKc_ATM"/>
    <property type="match status" value="1"/>
</dbReference>
<dbReference type="FunFam" id="1.10.1070.11:FF:000025">
    <property type="entry name" value="Serine/threonine-protein kinase Tel1"/>
    <property type="match status" value="1"/>
</dbReference>
<dbReference type="FunFam" id="3.30.1010.10:FF:000019">
    <property type="entry name" value="Serine/threonine-protein kinase Tel1"/>
    <property type="match status" value="1"/>
</dbReference>
<dbReference type="Gene3D" id="1.10.1070.11">
    <property type="entry name" value="Phosphatidylinositol 3-/4-kinase, catalytic domain"/>
    <property type="match status" value="1"/>
</dbReference>
<dbReference type="Gene3D" id="3.30.1010.10">
    <property type="entry name" value="Phosphatidylinositol 3-kinase Catalytic Subunit, Chain A, domain 4"/>
    <property type="match status" value="1"/>
</dbReference>
<dbReference type="InterPro" id="IPR016024">
    <property type="entry name" value="ARM-type_fold"/>
</dbReference>
<dbReference type="InterPro" id="IPR038980">
    <property type="entry name" value="ATM_plant"/>
</dbReference>
<dbReference type="InterPro" id="IPR003152">
    <property type="entry name" value="FATC_dom"/>
</dbReference>
<dbReference type="InterPro" id="IPR011009">
    <property type="entry name" value="Kinase-like_dom_sf"/>
</dbReference>
<dbReference type="InterPro" id="IPR000403">
    <property type="entry name" value="PI3/4_kinase_cat_dom"/>
</dbReference>
<dbReference type="InterPro" id="IPR036940">
    <property type="entry name" value="PI3/4_kinase_cat_sf"/>
</dbReference>
<dbReference type="InterPro" id="IPR018936">
    <property type="entry name" value="PI3/4_kinase_CS"/>
</dbReference>
<dbReference type="InterPro" id="IPR003151">
    <property type="entry name" value="PIK-rel_kinase_FAT"/>
</dbReference>
<dbReference type="InterPro" id="IPR014009">
    <property type="entry name" value="PIK_FAT"/>
</dbReference>
<dbReference type="InterPro" id="IPR044107">
    <property type="entry name" value="PIKKc_ATM"/>
</dbReference>
<dbReference type="InterPro" id="IPR021668">
    <property type="entry name" value="TAN"/>
</dbReference>
<dbReference type="PANTHER" id="PTHR37079">
    <property type="entry name" value="SERINE/THREONINE-PROTEIN KINASE ATM"/>
    <property type="match status" value="1"/>
</dbReference>
<dbReference type="PANTHER" id="PTHR37079:SF4">
    <property type="entry name" value="SERINE_THREONINE-PROTEIN KINASE ATM"/>
    <property type="match status" value="1"/>
</dbReference>
<dbReference type="Pfam" id="PF02259">
    <property type="entry name" value="FAT"/>
    <property type="match status" value="1"/>
</dbReference>
<dbReference type="Pfam" id="PF02260">
    <property type="entry name" value="FATC"/>
    <property type="match status" value="1"/>
</dbReference>
<dbReference type="Pfam" id="PF00454">
    <property type="entry name" value="PI3_PI4_kinase"/>
    <property type="match status" value="1"/>
</dbReference>
<dbReference type="Pfam" id="PF11640">
    <property type="entry name" value="TAN"/>
    <property type="match status" value="1"/>
</dbReference>
<dbReference type="SMART" id="SM01343">
    <property type="entry name" value="FATC"/>
    <property type="match status" value="1"/>
</dbReference>
<dbReference type="SMART" id="SM00146">
    <property type="entry name" value="PI3Kc"/>
    <property type="match status" value="1"/>
</dbReference>
<dbReference type="SMART" id="SM01342">
    <property type="entry name" value="TAN"/>
    <property type="match status" value="1"/>
</dbReference>
<dbReference type="SUPFAM" id="SSF48371">
    <property type="entry name" value="ARM repeat"/>
    <property type="match status" value="1"/>
</dbReference>
<dbReference type="SUPFAM" id="SSF56112">
    <property type="entry name" value="Protein kinase-like (PK-like)"/>
    <property type="match status" value="1"/>
</dbReference>
<dbReference type="PROSITE" id="PS51189">
    <property type="entry name" value="FAT"/>
    <property type="match status" value="1"/>
</dbReference>
<dbReference type="PROSITE" id="PS51190">
    <property type="entry name" value="FATC"/>
    <property type="match status" value="1"/>
</dbReference>
<dbReference type="PROSITE" id="PS00915">
    <property type="entry name" value="PI3_4_KINASE_1"/>
    <property type="match status" value="1"/>
</dbReference>
<dbReference type="PROSITE" id="PS00916">
    <property type="entry name" value="PI3_4_KINASE_2"/>
    <property type="match status" value="1"/>
</dbReference>
<dbReference type="PROSITE" id="PS50290">
    <property type="entry name" value="PI3_4_KINASE_3"/>
    <property type="match status" value="1"/>
</dbReference>